<dbReference type="EC" id="1.97.1.12" evidence="1"/>
<dbReference type="EMBL" id="AY958086">
    <property type="protein sequence ID" value="AAX45830.1"/>
    <property type="molecule type" value="Genomic_DNA"/>
</dbReference>
<dbReference type="RefSeq" id="YP_636558.1">
    <property type="nucleotide sequence ID" value="NC_008117.1"/>
</dbReference>
<dbReference type="SMR" id="Q32RG8"/>
<dbReference type="GeneID" id="4108150"/>
<dbReference type="GO" id="GO:0009535">
    <property type="term" value="C:chloroplast thylakoid membrane"/>
    <property type="evidence" value="ECO:0007669"/>
    <property type="project" value="UniProtKB-SubCell"/>
</dbReference>
<dbReference type="GO" id="GO:0009522">
    <property type="term" value="C:photosystem I"/>
    <property type="evidence" value="ECO:0007669"/>
    <property type="project" value="UniProtKB-KW"/>
</dbReference>
<dbReference type="GO" id="GO:0051539">
    <property type="term" value="F:4 iron, 4 sulfur cluster binding"/>
    <property type="evidence" value="ECO:0007669"/>
    <property type="project" value="UniProtKB-KW"/>
</dbReference>
<dbReference type="GO" id="GO:0016168">
    <property type="term" value="F:chlorophyll binding"/>
    <property type="evidence" value="ECO:0007669"/>
    <property type="project" value="UniProtKB-KW"/>
</dbReference>
<dbReference type="GO" id="GO:0009055">
    <property type="term" value="F:electron transfer activity"/>
    <property type="evidence" value="ECO:0007669"/>
    <property type="project" value="UniProtKB-UniRule"/>
</dbReference>
<dbReference type="GO" id="GO:0000287">
    <property type="term" value="F:magnesium ion binding"/>
    <property type="evidence" value="ECO:0007669"/>
    <property type="project" value="UniProtKB-UniRule"/>
</dbReference>
<dbReference type="GO" id="GO:0016491">
    <property type="term" value="F:oxidoreductase activity"/>
    <property type="evidence" value="ECO:0007669"/>
    <property type="project" value="UniProtKB-KW"/>
</dbReference>
<dbReference type="GO" id="GO:0015979">
    <property type="term" value="P:photosynthesis"/>
    <property type="evidence" value="ECO:0007669"/>
    <property type="project" value="UniProtKB-UniRule"/>
</dbReference>
<dbReference type="FunFam" id="1.20.1130.10:FF:000001">
    <property type="entry name" value="Photosystem I P700 chlorophyll a apoprotein A2"/>
    <property type="match status" value="1"/>
</dbReference>
<dbReference type="Gene3D" id="1.20.1130.10">
    <property type="entry name" value="Photosystem I PsaA/PsaB"/>
    <property type="match status" value="1"/>
</dbReference>
<dbReference type="HAMAP" id="MF_00458">
    <property type="entry name" value="PSI_PsaA"/>
    <property type="match status" value="1"/>
</dbReference>
<dbReference type="InterPro" id="IPR006243">
    <property type="entry name" value="PSI_PsaA"/>
</dbReference>
<dbReference type="InterPro" id="IPR001280">
    <property type="entry name" value="PSI_PsaA/B"/>
</dbReference>
<dbReference type="InterPro" id="IPR020586">
    <property type="entry name" value="PSI_PsaA/B_CS"/>
</dbReference>
<dbReference type="InterPro" id="IPR036408">
    <property type="entry name" value="PSI_PsaA/B_sf"/>
</dbReference>
<dbReference type="NCBIfam" id="TIGR01335">
    <property type="entry name" value="psaA"/>
    <property type="match status" value="1"/>
</dbReference>
<dbReference type="PANTHER" id="PTHR30128">
    <property type="entry name" value="OUTER MEMBRANE PROTEIN, OMPA-RELATED"/>
    <property type="match status" value="1"/>
</dbReference>
<dbReference type="PANTHER" id="PTHR30128:SF19">
    <property type="entry name" value="PHOTOSYSTEM I P700 CHLOROPHYLL A APOPROTEIN A1-RELATED"/>
    <property type="match status" value="1"/>
</dbReference>
<dbReference type="Pfam" id="PF00223">
    <property type="entry name" value="PsaA_PsaB"/>
    <property type="match status" value="1"/>
</dbReference>
<dbReference type="PIRSF" id="PIRSF002905">
    <property type="entry name" value="PSI_A"/>
    <property type="match status" value="1"/>
</dbReference>
<dbReference type="PRINTS" id="PR00257">
    <property type="entry name" value="PHOTSYSPSAAB"/>
</dbReference>
<dbReference type="SUPFAM" id="SSF81558">
    <property type="entry name" value="Photosystem I subunits PsaA/PsaB"/>
    <property type="match status" value="1"/>
</dbReference>
<dbReference type="PROSITE" id="PS00419">
    <property type="entry name" value="PHOTOSYSTEM_I_PSAAB"/>
    <property type="match status" value="1"/>
</dbReference>
<name>PSAA_ZYGCR</name>
<feature type="chain" id="PRO_0000275968" description="Photosystem I P700 chlorophyll a apoprotein A1">
    <location>
        <begin position="1"/>
        <end position="749"/>
    </location>
</feature>
<feature type="transmembrane region" description="Helical; Name=I" evidence="1">
    <location>
        <begin position="70"/>
        <end position="93"/>
    </location>
</feature>
<feature type="transmembrane region" description="Helical; Name=II" evidence="1">
    <location>
        <begin position="156"/>
        <end position="179"/>
    </location>
</feature>
<feature type="transmembrane region" description="Helical; Name=III" evidence="1">
    <location>
        <begin position="195"/>
        <end position="219"/>
    </location>
</feature>
<feature type="transmembrane region" description="Helical; Name=IV" evidence="1">
    <location>
        <begin position="291"/>
        <end position="309"/>
    </location>
</feature>
<feature type="transmembrane region" description="Helical; Name=V" evidence="1">
    <location>
        <begin position="346"/>
        <end position="369"/>
    </location>
</feature>
<feature type="transmembrane region" description="Helical; Name=VI" evidence="1">
    <location>
        <begin position="385"/>
        <end position="411"/>
    </location>
</feature>
<feature type="transmembrane region" description="Helical; Name=VII" evidence="1">
    <location>
        <begin position="433"/>
        <end position="455"/>
    </location>
</feature>
<feature type="transmembrane region" description="Helical; Name=VIII" evidence="1">
    <location>
        <begin position="531"/>
        <end position="549"/>
    </location>
</feature>
<feature type="transmembrane region" description="Helical; Name=IX" evidence="1">
    <location>
        <begin position="589"/>
        <end position="610"/>
    </location>
</feature>
<feature type="transmembrane region" description="Helical; Name=X" evidence="1">
    <location>
        <begin position="663"/>
        <end position="685"/>
    </location>
</feature>
<feature type="transmembrane region" description="Helical; Name=XI" evidence="1">
    <location>
        <begin position="723"/>
        <end position="743"/>
    </location>
</feature>
<feature type="binding site" evidence="1">
    <location>
        <position position="573"/>
    </location>
    <ligand>
        <name>[4Fe-4S] cluster</name>
        <dbReference type="ChEBI" id="CHEBI:49883"/>
        <note>ligand shared between dimeric partners</note>
    </ligand>
</feature>
<feature type="binding site" evidence="1">
    <location>
        <position position="582"/>
    </location>
    <ligand>
        <name>[4Fe-4S] cluster</name>
        <dbReference type="ChEBI" id="CHEBI:49883"/>
        <note>ligand shared between dimeric partners</note>
    </ligand>
</feature>
<feature type="binding site" description="axial binding residue" evidence="1">
    <location>
        <position position="674"/>
    </location>
    <ligand>
        <name>chlorophyll a'</name>
        <dbReference type="ChEBI" id="CHEBI:189419"/>
        <label>A1</label>
    </ligand>
    <ligandPart>
        <name>Mg</name>
        <dbReference type="ChEBI" id="CHEBI:25107"/>
    </ligandPart>
</feature>
<feature type="binding site" description="axial binding residue" evidence="1">
    <location>
        <position position="682"/>
    </location>
    <ligand>
        <name>chlorophyll a</name>
        <dbReference type="ChEBI" id="CHEBI:58416"/>
        <label>A3</label>
    </ligand>
    <ligandPart>
        <name>Mg</name>
        <dbReference type="ChEBI" id="CHEBI:25107"/>
    </ligandPart>
</feature>
<feature type="binding site" evidence="1">
    <location>
        <position position="690"/>
    </location>
    <ligand>
        <name>chlorophyll a</name>
        <dbReference type="ChEBI" id="CHEBI:58416"/>
        <label>A3</label>
    </ligand>
</feature>
<feature type="binding site" evidence="1">
    <location>
        <position position="691"/>
    </location>
    <ligand>
        <name>phylloquinone</name>
        <dbReference type="ChEBI" id="CHEBI:18067"/>
        <label>A</label>
    </ligand>
</feature>
<comment type="function">
    <text>PsaA and PsaB bind P700, the primary electron donor of photosystem I (PSI), as well as the electron acceptors A0, A1 and FX. PSI is a plastocyanin-ferredoxin oxidoreductase, converting photonic excitation into a charge separation, which transfers an electron from the donor P700 chlorophyll pair to the spectroscopically characterized acceptors A0, A1, FX, FA and FB in turn. Oxidized P700 is reduced on the lumenal side of the thylakoid membrane by plastocyanin.</text>
</comment>
<comment type="catalytic activity">
    <reaction evidence="1">
        <text>reduced [plastocyanin] + hnu + oxidized [2Fe-2S]-[ferredoxin] = oxidized [plastocyanin] + reduced [2Fe-2S]-[ferredoxin]</text>
        <dbReference type="Rhea" id="RHEA:30407"/>
        <dbReference type="Rhea" id="RHEA-COMP:10000"/>
        <dbReference type="Rhea" id="RHEA-COMP:10001"/>
        <dbReference type="Rhea" id="RHEA-COMP:10039"/>
        <dbReference type="Rhea" id="RHEA-COMP:10040"/>
        <dbReference type="ChEBI" id="CHEBI:29036"/>
        <dbReference type="ChEBI" id="CHEBI:30212"/>
        <dbReference type="ChEBI" id="CHEBI:33737"/>
        <dbReference type="ChEBI" id="CHEBI:33738"/>
        <dbReference type="ChEBI" id="CHEBI:49552"/>
        <dbReference type="EC" id="1.97.1.12"/>
    </reaction>
</comment>
<comment type="cofactor">
    <text evidence="1">P700 is a chlorophyll a/chlorophyll a' dimer, A0 is one or more chlorophyll a, A1 is one or both phylloquinones and FX is a shared 4Fe-4S iron-sulfur center.</text>
</comment>
<comment type="subunit">
    <text evidence="1">The PsaA/B heterodimer binds the P700 chlorophyll special pair and subsequent electron acceptors. PSI consists of a core antenna complex that captures photons, and an electron transfer chain that converts photonic excitation into a charge separation. The eukaryotic PSI reaction center is composed of at least 11 subunits.</text>
</comment>
<comment type="subcellular location">
    <subcellularLocation>
        <location evidence="1">Plastid</location>
        <location evidence="1">Chloroplast thylakoid membrane</location>
        <topology evidence="1">Multi-pass membrane protein</topology>
    </subcellularLocation>
</comment>
<comment type="similarity">
    <text evidence="1">Belongs to the PsaA/PsaB family.</text>
</comment>
<gene>
    <name evidence="1" type="primary">psaA</name>
</gene>
<reference key="1">
    <citation type="journal article" date="2005" name="BMC Biol.">
        <title>The complete chloroplast DNA sequences of the charophycean green algae Staurastrum and Zygnema reveal that the chloroplast genome underwent extensive changes during the evolution of the Zygnematales.</title>
        <authorList>
            <person name="Turmel M."/>
            <person name="Otis C."/>
            <person name="Lemieux C."/>
        </authorList>
    </citation>
    <scope>NUCLEOTIDE SEQUENCE [LARGE SCALE GENOMIC DNA]</scope>
</reference>
<proteinExistence type="inferred from homology"/>
<accession>Q32RG8</accession>
<sequence>MTIRSPEPEVKILVDIDPVPTSFERWAKPGHFARSLAKGPSTTTWIWDLHADAHDFDSHTSDLEEISRKVFSAHFGQLAVIFIWLSGMYFHGARFSNYEAWLSDPTHIKPSAQVVWPIVGQEILNGDVGGGFQGIQITSGFFQIWRAAGVTSELQLYATAIGGLVMATLMLIAGWFHYHKAAPKLAWFQDVESMLNHHLAGLLGLGSLSWAGHQIHVSLPINQLLDAGVDPKEIPLPHEFLLNRDLLAQLYPSFSKGLTPFFSLNWSEYSDFLTFRGGLNPVTGGLWLTDTAHHHLAIAVLFIVAGHMYRTNWGIGHSLREILEAHKGPFTGEGHKGLYEILTTSWHAQLAINLATLGSLTIIVAHHMYSMPPYPYLATDYGTQLSLFTHHMWIGGFCVVGAGAHAAIFLVRDYDPTTQYNNLLDRVLRHRDAIISHLNWVCIFLGFHSFGLYIHNDTMSALGRPQDMFSDTAIQLQPVFAQWIQNTHAAAPGFTAPNAAAATSLTWGGSDLVAVGGKVAMMPIPLGTADFLVHHIHAFTIHVTVLILLKGVLFSRSSRLIPDKANLGFRFPCDGPGRGGTCQVSAWDHVFLGLFWMYNAISVVIFHFSWKMQSDVWGSVTAKGVSHITGGNFAQSATTINGWLRDFLWAQASQVIQSYGSSLSAYGLVFLGAHFIWAFSLMFLFSGRGYWQELIESIVWAHNKLKVAPAIQPRALSIIQGRAVGVAHYLLGGIATTWAFFLARIIAVG</sequence>
<evidence type="ECO:0000255" key="1">
    <source>
        <dbReference type="HAMAP-Rule" id="MF_00458"/>
    </source>
</evidence>
<geneLocation type="chloroplast"/>
<keyword id="KW-0004">4Fe-4S</keyword>
<keyword id="KW-0148">Chlorophyll</keyword>
<keyword id="KW-0150">Chloroplast</keyword>
<keyword id="KW-0157">Chromophore</keyword>
<keyword id="KW-0249">Electron transport</keyword>
<keyword id="KW-0408">Iron</keyword>
<keyword id="KW-0411">Iron-sulfur</keyword>
<keyword id="KW-0460">Magnesium</keyword>
<keyword id="KW-0472">Membrane</keyword>
<keyword id="KW-0479">Metal-binding</keyword>
<keyword id="KW-0560">Oxidoreductase</keyword>
<keyword id="KW-0602">Photosynthesis</keyword>
<keyword id="KW-0603">Photosystem I</keyword>
<keyword id="KW-0934">Plastid</keyword>
<keyword id="KW-0793">Thylakoid</keyword>
<keyword id="KW-0812">Transmembrane</keyword>
<keyword id="KW-1133">Transmembrane helix</keyword>
<keyword id="KW-0813">Transport</keyword>
<organism>
    <name type="scientific">Zygnema circumcarinatum</name>
    <name type="common">Green alga</name>
    <dbReference type="NCBI Taxonomy" id="35869"/>
    <lineage>
        <taxon>Eukaryota</taxon>
        <taxon>Viridiplantae</taxon>
        <taxon>Streptophyta</taxon>
        <taxon>Zygnematophyceae</taxon>
        <taxon>Zygnematophycidae</taxon>
        <taxon>Zygnematales</taxon>
        <taxon>Zygnemataceae</taxon>
        <taxon>Zygnema</taxon>
    </lineage>
</organism>
<protein>
    <recommendedName>
        <fullName evidence="1">Photosystem I P700 chlorophyll a apoprotein A1</fullName>
        <ecNumber evidence="1">1.97.1.12</ecNumber>
    </recommendedName>
    <alternativeName>
        <fullName evidence="1">PSI-A</fullName>
    </alternativeName>
    <alternativeName>
        <fullName evidence="1">PsaA</fullName>
    </alternativeName>
</protein>